<name>PPR42_DANRE</name>
<organism>
    <name type="scientific">Danio rerio</name>
    <name type="common">Zebrafish</name>
    <name type="synonym">Brachydanio rerio</name>
    <dbReference type="NCBI Taxonomy" id="7955"/>
    <lineage>
        <taxon>Eukaryota</taxon>
        <taxon>Metazoa</taxon>
        <taxon>Chordata</taxon>
        <taxon>Craniata</taxon>
        <taxon>Vertebrata</taxon>
        <taxon>Euteleostomi</taxon>
        <taxon>Actinopterygii</taxon>
        <taxon>Neopterygii</taxon>
        <taxon>Teleostei</taxon>
        <taxon>Ostariophysi</taxon>
        <taxon>Cypriniformes</taxon>
        <taxon>Danionidae</taxon>
        <taxon>Danioninae</taxon>
        <taxon>Danio</taxon>
    </lineage>
</organism>
<evidence type="ECO:0000250" key="1"/>
<evidence type="ECO:0000256" key="2">
    <source>
        <dbReference type="SAM" id="MobiDB-lite"/>
    </source>
</evidence>
<reference key="1">
    <citation type="submission" date="2004-06" db="EMBL/GenBank/DDBJ databases">
        <authorList>
            <consortium name="NIH - Zebrafish Gene Collection (ZGC) project"/>
        </authorList>
    </citation>
    <scope>NUCLEOTIDE SEQUENCE [LARGE SCALE MRNA]</scope>
</reference>
<accession>Q6GQN5</accession>
<gene>
    <name type="primary">ppp1r42</name>
    <name type="synonym">lrrc67</name>
    <name type="ORF">zgc:91834</name>
</gene>
<sequence length="329" mass="37473">MVRLTVHLIAKLGSHSKSSRSESFQQYLRKLTHLNFSDKNIEEIDDLSVCRNLTVLYLYDNQISQICNLGFASNLTHLYMQNNNISCIENLSSLHKLSKLFLGGNSITVVEGLEELKSLKELHVEGQKLPCGEKLAFDPHSISSLSETLCILNISKNNIDELWDLAPLRKMTHLFAADNQLHDIQELETVFSQWFKLRLLDLSRNPVCHKPKYRDRLITVCKFLDDLDGKQINELSRQFLINWKASKDAKKKPEDGKDNKLQVANQLSTSADFHLGPQHPSVRERSSSLSKPSENEKPGVTFRTDQIQADSRGRGTRGDSSTEWQSLKI</sequence>
<feature type="chain" id="PRO_0000326178" description="Protein phosphatase 1 regulatory subunit 42">
    <location>
        <begin position="1"/>
        <end position="329"/>
    </location>
</feature>
<feature type="repeat" description="LRR 1">
    <location>
        <begin position="30"/>
        <end position="51"/>
    </location>
</feature>
<feature type="repeat" description="LRR 2">
    <location>
        <begin position="52"/>
        <end position="73"/>
    </location>
</feature>
<feature type="repeat" description="LRR 3">
    <location>
        <begin position="74"/>
        <end position="95"/>
    </location>
</feature>
<feature type="repeat" description="LRR 4">
    <location>
        <begin position="96"/>
        <end position="117"/>
    </location>
</feature>
<feature type="repeat" description="LRR 5">
    <location>
        <begin position="118"/>
        <end position="139"/>
    </location>
</feature>
<feature type="repeat" description="LRR 6">
    <location>
        <begin position="148"/>
        <end position="169"/>
    </location>
</feature>
<feature type="repeat" description="LRR 7">
    <location>
        <begin position="170"/>
        <end position="191"/>
    </location>
</feature>
<feature type="domain" description="LRRCT">
    <location>
        <begin position="205"/>
        <end position="243"/>
    </location>
</feature>
<feature type="region of interest" description="Disordered" evidence="2">
    <location>
        <begin position="268"/>
        <end position="329"/>
    </location>
</feature>
<feature type="compositionally biased region" description="Polar residues" evidence="2">
    <location>
        <begin position="318"/>
        <end position="329"/>
    </location>
</feature>
<dbReference type="EMBL" id="BC072707">
    <property type="protein sequence ID" value="AAH72707.1"/>
    <property type="molecule type" value="mRNA"/>
</dbReference>
<dbReference type="RefSeq" id="NP_001002202.1">
    <property type="nucleotide sequence ID" value="NM_001002202.1"/>
</dbReference>
<dbReference type="RefSeq" id="XP_017209310.1">
    <property type="nucleotide sequence ID" value="XM_017353821.3"/>
</dbReference>
<dbReference type="RefSeq" id="XP_068073153.1">
    <property type="nucleotide sequence ID" value="XM_068217052.1"/>
</dbReference>
<dbReference type="SMR" id="Q6GQN5"/>
<dbReference type="FunCoup" id="Q6GQN5">
    <property type="interactions" value="450"/>
</dbReference>
<dbReference type="STRING" id="7955.ENSDARP00000074793"/>
<dbReference type="PaxDb" id="7955-ENSDARP00000074793"/>
<dbReference type="Ensembl" id="ENSDART00000080343">
    <property type="protein sequence ID" value="ENSDARP00000074793"/>
    <property type="gene ID" value="ENSDARG00000057632"/>
</dbReference>
<dbReference type="GeneID" id="431749"/>
<dbReference type="KEGG" id="dre:431749"/>
<dbReference type="AGR" id="ZFIN:ZDB-GENE-040704-43"/>
<dbReference type="CTD" id="286187"/>
<dbReference type="ZFIN" id="ZDB-GENE-040704-43">
    <property type="gene designation" value="ppp1r42"/>
</dbReference>
<dbReference type="eggNOG" id="KOG2769">
    <property type="taxonomic scope" value="Eukaryota"/>
</dbReference>
<dbReference type="HOGENOM" id="CLU_062444_0_0_1"/>
<dbReference type="InParanoid" id="Q6GQN5"/>
<dbReference type="OMA" id="RRFLMNW"/>
<dbReference type="OrthoDB" id="10262005at2759"/>
<dbReference type="PhylomeDB" id="Q6GQN5"/>
<dbReference type="TreeFam" id="TF329227"/>
<dbReference type="PRO" id="PR:Q6GQN5"/>
<dbReference type="Proteomes" id="UP000000437">
    <property type="component" value="Chromosome 24"/>
</dbReference>
<dbReference type="Bgee" id="ENSDARG00000057632">
    <property type="expression patterns" value="Expressed in testis and 13 other cell types or tissues"/>
</dbReference>
<dbReference type="GO" id="GO:0005813">
    <property type="term" value="C:centrosome"/>
    <property type="evidence" value="ECO:0000250"/>
    <property type="project" value="UniProtKB"/>
</dbReference>
<dbReference type="GO" id="GO:0005737">
    <property type="term" value="C:cytoplasm"/>
    <property type="evidence" value="ECO:0007669"/>
    <property type="project" value="UniProtKB-KW"/>
</dbReference>
<dbReference type="GO" id="GO:0002177">
    <property type="term" value="C:manchette"/>
    <property type="evidence" value="ECO:0000250"/>
    <property type="project" value="UniProtKB"/>
</dbReference>
<dbReference type="GO" id="GO:0015630">
    <property type="term" value="C:microtubule cytoskeleton"/>
    <property type="evidence" value="ECO:0000250"/>
    <property type="project" value="UniProtKB"/>
</dbReference>
<dbReference type="GO" id="GO:0005815">
    <property type="term" value="C:microtubule organizing center"/>
    <property type="evidence" value="ECO:0000250"/>
    <property type="project" value="UniProtKB"/>
</dbReference>
<dbReference type="GO" id="GO:0003779">
    <property type="term" value="F:actin binding"/>
    <property type="evidence" value="ECO:0000250"/>
    <property type="project" value="UniProtKB"/>
</dbReference>
<dbReference type="GO" id="GO:0070840">
    <property type="term" value="F:dynein complex binding"/>
    <property type="evidence" value="ECO:0000250"/>
    <property type="project" value="UniProtKB"/>
</dbReference>
<dbReference type="GO" id="GO:0015631">
    <property type="term" value="F:tubulin binding"/>
    <property type="evidence" value="ECO:0000250"/>
    <property type="project" value="UniProtKB"/>
</dbReference>
<dbReference type="CDD" id="cd21340">
    <property type="entry name" value="PPP1R42"/>
    <property type="match status" value="1"/>
</dbReference>
<dbReference type="FunFam" id="3.80.10.10:FF:000293">
    <property type="entry name" value="Protein phosphatase 1 regulatory subunit 42"/>
    <property type="match status" value="1"/>
</dbReference>
<dbReference type="FunFam" id="3.80.10.10:FF:000201">
    <property type="entry name" value="protein phosphatase 1 regulatory subunit 42"/>
    <property type="match status" value="1"/>
</dbReference>
<dbReference type="Gene3D" id="3.80.10.10">
    <property type="entry name" value="Ribonuclease Inhibitor"/>
    <property type="match status" value="2"/>
</dbReference>
<dbReference type="InterPro" id="IPR001611">
    <property type="entry name" value="Leu-rich_rpt"/>
</dbReference>
<dbReference type="InterPro" id="IPR032675">
    <property type="entry name" value="LRR_dom_sf"/>
</dbReference>
<dbReference type="InterPro" id="IPR050836">
    <property type="entry name" value="SDS22/Internalin_LRR"/>
</dbReference>
<dbReference type="PANTHER" id="PTHR46652">
    <property type="entry name" value="LEUCINE-RICH REPEAT AND IQ DOMAIN-CONTAINING PROTEIN 1-RELATED"/>
    <property type="match status" value="1"/>
</dbReference>
<dbReference type="PANTHER" id="PTHR46652:SF3">
    <property type="entry name" value="LEUCINE-RICH REPEAT-CONTAINING PROTEIN 9"/>
    <property type="match status" value="1"/>
</dbReference>
<dbReference type="Pfam" id="PF13855">
    <property type="entry name" value="LRR_8"/>
    <property type="match status" value="1"/>
</dbReference>
<dbReference type="SMART" id="SM00365">
    <property type="entry name" value="LRR_SD22"/>
    <property type="match status" value="5"/>
</dbReference>
<dbReference type="SUPFAM" id="SSF52058">
    <property type="entry name" value="L domain-like"/>
    <property type="match status" value="1"/>
</dbReference>
<dbReference type="PROSITE" id="PS51450">
    <property type="entry name" value="LRR"/>
    <property type="match status" value="7"/>
</dbReference>
<keyword id="KW-0963">Cytoplasm</keyword>
<keyword id="KW-0206">Cytoskeleton</keyword>
<keyword id="KW-0433">Leucine-rich repeat</keyword>
<keyword id="KW-1185">Reference proteome</keyword>
<keyword id="KW-0677">Repeat</keyword>
<proteinExistence type="evidence at transcript level"/>
<protein>
    <recommendedName>
        <fullName>Protein phosphatase 1 regulatory subunit 42</fullName>
    </recommendedName>
    <alternativeName>
        <fullName>Leucine-rich repeat-containing protein 67</fullName>
    </alternativeName>
</protein>
<comment type="function">
    <text evidence="1">May regulate phosphatase activity of protein phosphatase 1 (PP1) complexes.</text>
</comment>
<comment type="subcellular location">
    <subcellularLocation>
        <location evidence="1">Cytoplasm</location>
        <location evidence="1">Cytoskeleton</location>
    </subcellularLocation>
    <subcellularLocation>
        <location evidence="1">Cytoplasm</location>
        <location evidence="1">Cytoskeleton</location>
        <location evidence="1">Microtubule organizing center</location>
        <location evidence="1">Centrosome</location>
    </subcellularLocation>
</comment>